<evidence type="ECO:0000250" key="1"/>
<evidence type="ECO:0000255" key="2">
    <source>
        <dbReference type="PROSITE-ProRule" id="PRU00088"/>
    </source>
</evidence>
<evidence type="ECO:0000305" key="3"/>
<name>MIOC_ECO57</name>
<reference key="1">
    <citation type="journal article" date="2001" name="Nature">
        <title>Genome sequence of enterohaemorrhagic Escherichia coli O157:H7.</title>
        <authorList>
            <person name="Perna N.T."/>
            <person name="Plunkett G. III"/>
            <person name="Burland V."/>
            <person name="Mau B."/>
            <person name="Glasner J.D."/>
            <person name="Rose D.J."/>
            <person name="Mayhew G.F."/>
            <person name="Evans P.S."/>
            <person name="Gregor J."/>
            <person name="Kirkpatrick H.A."/>
            <person name="Posfai G."/>
            <person name="Hackett J."/>
            <person name="Klink S."/>
            <person name="Boutin A."/>
            <person name="Shao Y."/>
            <person name="Miller L."/>
            <person name="Grotbeck E.J."/>
            <person name="Davis N.W."/>
            <person name="Lim A."/>
            <person name="Dimalanta E.T."/>
            <person name="Potamousis K."/>
            <person name="Apodaca J."/>
            <person name="Anantharaman T.S."/>
            <person name="Lin J."/>
            <person name="Yen G."/>
            <person name="Schwartz D.C."/>
            <person name="Welch R.A."/>
            <person name="Blattner F.R."/>
        </authorList>
    </citation>
    <scope>NUCLEOTIDE SEQUENCE [LARGE SCALE GENOMIC DNA]</scope>
    <source>
        <strain>O157:H7 / EDL933 / ATCC 700927 / EHEC</strain>
    </source>
</reference>
<reference key="2">
    <citation type="journal article" date="2001" name="DNA Res.">
        <title>Complete genome sequence of enterohemorrhagic Escherichia coli O157:H7 and genomic comparison with a laboratory strain K-12.</title>
        <authorList>
            <person name="Hayashi T."/>
            <person name="Makino K."/>
            <person name="Ohnishi M."/>
            <person name="Kurokawa K."/>
            <person name="Ishii K."/>
            <person name="Yokoyama K."/>
            <person name="Han C.-G."/>
            <person name="Ohtsubo E."/>
            <person name="Nakayama K."/>
            <person name="Murata T."/>
            <person name="Tanaka M."/>
            <person name="Tobe T."/>
            <person name="Iida T."/>
            <person name="Takami H."/>
            <person name="Honda T."/>
            <person name="Sasakawa C."/>
            <person name="Ogasawara N."/>
            <person name="Yasunaga T."/>
            <person name="Kuhara S."/>
            <person name="Shiba T."/>
            <person name="Hattori M."/>
            <person name="Shinagawa H."/>
        </authorList>
    </citation>
    <scope>NUCLEOTIDE SEQUENCE [LARGE SCALE GENOMIC DNA]</scope>
    <source>
        <strain>O157:H7 / Sakai / RIMD 0509952 / EHEC</strain>
    </source>
</reference>
<organism>
    <name type="scientific">Escherichia coli O157:H7</name>
    <dbReference type="NCBI Taxonomy" id="83334"/>
    <lineage>
        <taxon>Bacteria</taxon>
        <taxon>Pseudomonadati</taxon>
        <taxon>Pseudomonadota</taxon>
        <taxon>Gammaproteobacteria</taxon>
        <taxon>Enterobacterales</taxon>
        <taxon>Enterobacteriaceae</taxon>
        <taxon>Escherichia</taxon>
    </lineage>
</organism>
<proteinExistence type="inferred from homology"/>
<accession>P58208</accession>
<feature type="initiator methionine" description="Removed" evidence="1">
    <location>
        <position position="1"/>
    </location>
</feature>
<feature type="chain" id="PRO_0000196573" description="Protein MioC">
    <location>
        <begin position="2"/>
        <end position="147"/>
    </location>
</feature>
<feature type="domain" description="Flavodoxin-like" evidence="2">
    <location>
        <begin position="4"/>
        <end position="143"/>
    </location>
</feature>
<protein>
    <recommendedName>
        <fullName>Protein MioC</fullName>
    </recommendedName>
</protein>
<sequence>MADITLISGSTLGGAEYVAEHLAEKLEEAGFTTETLHGPLLEDLSASGIWLVISSTHGAGDIPDNLSPFYEALQEQKPDLSAVRFGAIGIGSREYDTFCGAIDKLEAELKNSGAKQTGETLKINILDHDIPEDPAEEWLGSWINLLK</sequence>
<dbReference type="EMBL" id="AE005174">
    <property type="protein sequence ID" value="AAG58945.1"/>
    <property type="molecule type" value="Genomic_DNA"/>
</dbReference>
<dbReference type="EMBL" id="BA000007">
    <property type="protein sequence ID" value="BAB38107.1"/>
    <property type="molecule type" value="Genomic_DNA"/>
</dbReference>
<dbReference type="PIR" id="D91214">
    <property type="entry name" value="D91214"/>
</dbReference>
<dbReference type="PIR" id="E86060">
    <property type="entry name" value="E86060"/>
</dbReference>
<dbReference type="RefSeq" id="NP_312711.1">
    <property type="nucleotide sequence ID" value="NC_002695.1"/>
</dbReference>
<dbReference type="RefSeq" id="WP_000763742.1">
    <property type="nucleotide sequence ID" value="NZ_VOAI01000011.1"/>
</dbReference>
<dbReference type="SMR" id="P58208"/>
<dbReference type="STRING" id="155864.Z5243"/>
<dbReference type="GeneID" id="75173976"/>
<dbReference type="GeneID" id="915324"/>
<dbReference type="KEGG" id="ece:Z5243"/>
<dbReference type="KEGG" id="ecs:ECs_4684"/>
<dbReference type="PATRIC" id="fig|386585.9.peg.4890"/>
<dbReference type="eggNOG" id="COG0716">
    <property type="taxonomic scope" value="Bacteria"/>
</dbReference>
<dbReference type="HOGENOM" id="CLU_051402_4_1_6"/>
<dbReference type="OMA" id="GFETTIH"/>
<dbReference type="Proteomes" id="UP000000558">
    <property type="component" value="Chromosome"/>
</dbReference>
<dbReference type="Proteomes" id="UP000002519">
    <property type="component" value="Chromosome"/>
</dbReference>
<dbReference type="GO" id="GO:0005829">
    <property type="term" value="C:cytosol"/>
    <property type="evidence" value="ECO:0007669"/>
    <property type="project" value="TreeGrafter"/>
</dbReference>
<dbReference type="GO" id="GO:0050660">
    <property type="term" value="F:flavin adenine dinucleotide binding"/>
    <property type="evidence" value="ECO:0007669"/>
    <property type="project" value="TreeGrafter"/>
</dbReference>
<dbReference type="GO" id="GO:0010181">
    <property type="term" value="F:FMN binding"/>
    <property type="evidence" value="ECO:0007669"/>
    <property type="project" value="InterPro"/>
</dbReference>
<dbReference type="GO" id="GO:0016491">
    <property type="term" value="F:oxidoreductase activity"/>
    <property type="evidence" value="ECO:0007669"/>
    <property type="project" value="TreeGrafter"/>
</dbReference>
<dbReference type="FunFam" id="3.40.50.360:FF:000026">
    <property type="entry name" value="Flavoprotein MioC"/>
    <property type="match status" value="1"/>
</dbReference>
<dbReference type="Gene3D" id="3.40.50.360">
    <property type="match status" value="1"/>
</dbReference>
<dbReference type="InterPro" id="IPR008254">
    <property type="entry name" value="Flavodoxin/NO_synth"/>
</dbReference>
<dbReference type="InterPro" id="IPR029039">
    <property type="entry name" value="Flavoprotein-like_sf"/>
</dbReference>
<dbReference type="NCBIfam" id="NF006531">
    <property type="entry name" value="PRK09004.1"/>
    <property type="match status" value="1"/>
</dbReference>
<dbReference type="PANTHER" id="PTHR19384:SF128">
    <property type="entry name" value="NADPH OXIDOREDUCTASE A"/>
    <property type="match status" value="1"/>
</dbReference>
<dbReference type="PANTHER" id="PTHR19384">
    <property type="entry name" value="NITRIC OXIDE SYNTHASE-RELATED"/>
    <property type="match status" value="1"/>
</dbReference>
<dbReference type="Pfam" id="PF00258">
    <property type="entry name" value="Flavodoxin_1"/>
    <property type="match status" value="1"/>
</dbReference>
<dbReference type="SUPFAM" id="SSF52218">
    <property type="entry name" value="Flavoproteins"/>
    <property type="match status" value="1"/>
</dbReference>
<dbReference type="PROSITE" id="PS50902">
    <property type="entry name" value="FLAVODOXIN_LIKE"/>
    <property type="match status" value="1"/>
</dbReference>
<gene>
    <name type="primary">mioC</name>
    <name type="ordered locus">Z5243</name>
    <name type="ordered locus">ECs4684</name>
</gene>
<comment type="function">
    <text evidence="1">Probable electron transporter required for biotin synthase activity.</text>
</comment>
<comment type="cofactor">
    <cofactor evidence="1">
        <name>FMN</name>
        <dbReference type="ChEBI" id="CHEBI:58210"/>
    </cofactor>
</comment>
<comment type="subunit">
    <text evidence="1">Homodimer.</text>
</comment>
<comment type="similarity">
    <text evidence="3">Belongs to the flavodoxin family. MioC subfamily.</text>
</comment>
<keyword id="KW-0249">Electron transport</keyword>
<keyword id="KW-0285">Flavoprotein</keyword>
<keyword id="KW-0288">FMN</keyword>
<keyword id="KW-1185">Reference proteome</keyword>
<keyword id="KW-0813">Transport</keyword>